<comment type="function">
    <text evidence="1">Involved in the post-transcriptional modification of the uridine at the wobble position (U34) of tRNA(Lys), tRNA(Glu) and tRNA(Gln). Catalyzes the conversion of 2-thiouridine (S2U-RNA) to 2-selenouridine (Se2U-RNA). Acts in a two-step process involving geranylation of 2-thiouridine (S2U) to S-geranyl-2-thiouridine (geS2U) and subsequent selenation of the latter derivative to 2-selenouridine (Se2U) in the tRNA chain.</text>
</comment>
<comment type="catalytic activity">
    <reaction evidence="1">
        <text>5-methylaminomethyl-2-thiouridine(34) in tRNA + selenophosphate + (2E)-geranyl diphosphate + H2O + H(+) = 5-methylaminomethyl-2-selenouridine(34) in tRNA + (2E)-thiogeraniol + phosphate + diphosphate</text>
        <dbReference type="Rhea" id="RHEA:42716"/>
        <dbReference type="Rhea" id="RHEA-COMP:10195"/>
        <dbReference type="Rhea" id="RHEA-COMP:10196"/>
        <dbReference type="ChEBI" id="CHEBI:15377"/>
        <dbReference type="ChEBI" id="CHEBI:15378"/>
        <dbReference type="ChEBI" id="CHEBI:16144"/>
        <dbReference type="ChEBI" id="CHEBI:33019"/>
        <dbReference type="ChEBI" id="CHEBI:43474"/>
        <dbReference type="ChEBI" id="CHEBI:58057"/>
        <dbReference type="ChEBI" id="CHEBI:74455"/>
        <dbReference type="ChEBI" id="CHEBI:82743"/>
        <dbReference type="ChEBI" id="CHEBI:143703"/>
        <dbReference type="EC" id="2.9.1.3"/>
    </reaction>
    <physiologicalReaction direction="left-to-right" evidence="1">
        <dbReference type="Rhea" id="RHEA:42717"/>
    </physiologicalReaction>
</comment>
<comment type="catalytic activity">
    <reaction evidence="1">
        <text>5-methylaminomethyl-2-thiouridine(34) in tRNA + (2E)-geranyl diphosphate = 5-methylaminomethyl-S-(2E)-geranyl-thiouridine(34) in tRNA + diphosphate</text>
        <dbReference type="Rhea" id="RHEA:14085"/>
        <dbReference type="Rhea" id="RHEA-COMP:10195"/>
        <dbReference type="Rhea" id="RHEA-COMP:14654"/>
        <dbReference type="ChEBI" id="CHEBI:33019"/>
        <dbReference type="ChEBI" id="CHEBI:58057"/>
        <dbReference type="ChEBI" id="CHEBI:74455"/>
        <dbReference type="ChEBI" id="CHEBI:140632"/>
    </reaction>
    <physiologicalReaction direction="left-to-right" evidence="1">
        <dbReference type="Rhea" id="RHEA:14086"/>
    </physiologicalReaction>
</comment>
<comment type="catalytic activity">
    <reaction evidence="1">
        <text>5-methylaminomethyl-S-(2E)-geranyl-thiouridine(34) in tRNA + selenophosphate + H(+) = 5-methylaminomethyl-2-(Se-phospho)selenouridine(34) in tRNA + (2E)-thiogeraniol</text>
        <dbReference type="Rhea" id="RHEA:60172"/>
        <dbReference type="Rhea" id="RHEA-COMP:14654"/>
        <dbReference type="Rhea" id="RHEA-COMP:15523"/>
        <dbReference type="ChEBI" id="CHEBI:15378"/>
        <dbReference type="ChEBI" id="CHEBI:16144"/>
        <dbReference type="ChEBI" id="CHEBI:140632"/>
        <dbReference type="ChEBI" id="CHEBI:143702"/>
        <dbReference type="ChEBI" id="CHEBI:143703"/>
    </reaction>
    <physiologicalReaction direction="left-to-right" evidence="1">
        <dbReference type="Rhea" id="RHEA:60173"/>
    </physiologicalReaction>
</comment>
<comment type="catalytic activity">
    <reaction evidence="1">
        <text>5-methylaminomethyl-2-(Se-phospho)selenouridine(34) in tRNA + H2O = 5-methylaminomethyl-2-selenouridine(34) in tRNA + phosphate</text>
        <dbReference type="Rhea" id="RHEA:60176"/>
        <dbReference type="Rhea" id="RHEA-COMP:10196"/>
        <dbReference type="Rhea" id="RHEA-COMP:15523"/>
        <dbReference type="ChEBI" id="CHEBI:15377"/>
        <dbReference type="ChEBI" id="CHEBI:43474"/>
        <dbReference type="ChEBI" id="CHEBI:82743"/>
        <dbReference type="ChEBI" id="CHEBI:143702"/>
    </reaction>
    <physiologicalReaction direction="left-to-right" evidence="1">
        <dbReference type="Rhea" id="RHEA:60177"/>
    </physiologicalReaction>
</comment>
<comment type="subunit">
    <text evidence="1">Monomer.</text>
</comment>
<comment type="similarity">
    <text evidence="1">Belongs to the SelU family.</text>
</comment>
<reference key="1">
    <citation type="submission" date="2007-08" db="EMBL/GenBank/DDBJ databases">
        <title>Complete sequence of Shewanella sediminis HAW-EB3.</title>
        <authorList>
            <consortium name="US DOE Joint Genome Institute"/>
            <person name="Copeland A."/>
            <person name="Lucas S."/>
            <person name="Lapidus A."/>
            <person name="Barry K."/>
            <person name="Glavina del Rio T."/>
            <person name="Dalin E."/>
            <person name="Tice H."/>
            <person name="Pitluck S."/>
            <person name="Chertkov O."/>
            <person name="Brettin T."/>
            <person name="Bruce D."/>
            <person name="Detter J.C."/>
            <person name="Han C."/>
            <person name="Schmutz J."/>
            <person name="Larimer F."/>
            <person name="Land M."/>
            <person name="Hauser L."/>
            <person name="Kyrpides N."/>
            <person name="Kim E."/>
            <person name="Zhao J.-S."/>
            <person name="Richardson P."/>
        </authorList>
    </citation>
    <scope>NUCLEOTIDE SEQUENCE [LARGE SCALE GENOMIC DNA]</scope>
    <source>
        <strain>HAW-EB3</strain>
    </source>
</reference>
<keyword id="KW-1185">Reference proteome</keyword>
<keyword id="KW-0711">Selenium</keyword>
<keyword id="KW-0808">Transferase</keyword>
<feature type="chain" id="PRO_1000088092" description="tRNA 2-selenouridine synthase">
    <location>
        <begin position="1"/>
        <end position="369"/>
    </location>
</feature>
<feature type="domain" description="Rhodanese" evidence="1">
    <location>
        <begin position="15"/>
        <end position="138"/>
    </location>
</feature>
<feature type="active site" description="S-selanylcysteine intermediate" evidence="1">
    <location>
        <position position="98"/>
    </location>
</feature>
<protein>
    <recommendedName>
        <fullName evidence="1">tRNA 2-selenouridine synthase</fullName>
        <ecNumber evidence="1">2.9.1.3</ecNumber>
    </recommendedName>
</protein>
<sequence>MSQNIVPKSAYREIMLSGHPMMDVRAPIEFNKGAFPSSTNLPLMQDSERQKVGTCYKNKGQDAAIALGHSLVNGQIKQQRVEAWLEFISLHPNAYLYCFRGGLRSQLTQQWIKEAGIEIPYVEGGYKAMRQYLIEVIDEAPKQSPIHILSGITGSGKTDFLLQRSEAIDLEGLAHHRGSSFGRYHEPQPSQINFENNLAVSLLKHQERAEKCLLVEDESFLIGRSAIPKQFYSGMQAADMLVLEEPEGARLNRLLNEYVHKMHSGYVERLGEEAGFDAFAEYLSQSITGIKKRLGGQLHDEFQSIIANALNIQRQRGDTQPHMEWISLLLTKYYDPMYQYQLDKKQSRVIFKGSHQAMHEWLDEYSSKG</sequence>
<organism>
    <name type="scientific">Shewanella sediminis (strain HAW-EB3)</name>
    <dbReference type="NCBI Taxonomy" id="425104"/>
    <lineage>
        <taxon>Bacteria</taxon>
        <taxon>Pseudomonadati</taxon>
        <taxon>Pseudomonadota</taxon>
        <taxon>Gammaproteobacteria</taxon>
        <taxon>Alteromonadales</taxon>
        <taxon>Shewanellaceae</taxon>
        <taxon>Shewanella</taxon>
    </lineage>
</organism>
<proteinExistence type="inferred from homology"/>
<accession>A8G1H1</accession>
<gene>
    <name evidence="1" type="primary">selU</name>
    <name type="ordered locus">Ssed_4342</name>
</gene>
<dbReference type="EC" id="2.9.1.3" evidence="1"/>
<dbReference type="EMBL" id="CP000821">
    <property type="protein sequence ID" value="ABV38944.1"/>
    <property type="molecule type" value="Genomic_DNA"/>
</dbReference>
<dbReference type="RefSeq" id="WP_012144671.1">
    <property type="nucleotide sequence ID" value="NC_009831.1"/>
</dbReference>
<dbReference type="SMR" id="A8G1H1"/>
<dbReference type="STRING" id="425104.Ssed_4342"/>
<dbReference type="KEGG" id="sse:Ssed_4342"/>
<dbReference type="eggNOG" id="COG2603">
    <property type="taxonomic scope" value="Bacteria"/>
</dbReference>
<dbReference type="HOGENOM" id="CLU_043456_1_0_6"/>
<dbReference type="OrthoDB" id="9808735at2"/>
<dbReference type="Proteomes" id="UP000002015">
    <property type="component" value="Chromosome"/>
</dbReference>
<dbReference type="GO" id="GO:0016765">
    <property type="term" value="F:transferase activity, transferring alkyl or aryl (other than methyl) groups"/>
    <property type="evidence" value="ECO:0007669"/>
    <property type="project" value="UniProtKB-UniRule"/>
</dbReference>
<dbReference type="GO" id="GO:0043828">
    <property type="term" value="F:tRNA 2-selenouridine synthase activity"/>
    <property type="evidence" value="ECO:0007669"/>
    <property type="project" value="UniProtKB-EC"/>
</dbReference>
<dbReference type="GO" id="GO:0002098">
    <property type="term" value="P:tRNA wobble uridine modification"/>
    <property type="evidence" value="ECO:0007669"/>
    <property type="project" value="UniProtKB-UniRule"/>
</dbReference>
<dbReference type="Gene3D" id="3.40.250.10">
    <property type="entry name" value="Rhodanese-like domain"/>
    <property type="match status" value="1"/>
</dbReference>
<dbReference type="HAMAP" id="MF_01622">
    <property type="entry name" value="tRNA_sel_U_synth"/>
    <property type="match status" value="1"/>
</dbReference>
<dbReference type="InterPro" id="IPR001763">
    <property type="entry name" value="Rhodanese-like_dom"/>
</dbReference>
<dbReference type="InterPro" id="IPR036873">
    <property type="entry name" value="Rhodanese-like_dom_sf"/>
</dbReference>
<dbReference type="InterPro" id="IPR017582">
    <property type="entry name" value="SelU"/>
</dbReference>
<dbReference type="NCBIfam" id="NF008750">
    <property type="entry name" value="PRK11784.1-2"/>
    <property type="match status" value="1"/>
</dbReference>
<dbReference type="NCBIfam" id="NF008751">
    <property type="entry name" value="PRK11784.1-3"/>
    <property type="match status" value="1"/>
</dbReference>
<dbReference type="NCBIfam" id="TIGR03167">
    <property type="entry name" value="tRNA_sel_U_synt"/>
    <property type="match status" value="1"/>
</dbReference>
<dbReference type="PANTHER" id="PTHR30401">
    <property type="entry name" value="TRNA 2-SELENOURIDINE SYNTHASE"/>
    <property type="match status" value="1"/>
</dbReference>
<dbReference type="PANTHER" id="PTHR30401:SF0">
    <property type="entry name" value="TRNA 2-SELENOURIDINE SYNTHASE"/>
    <property type="match status" value="1"/>
</dbReference>
<dbReference type="SMART" id="SM00450">
    <property type="entry name" value="RHOD"/>
    <property type="match status" value="1"/>
</dbReference>
<dbReference type="SUPFAM" id="SSF52821">
    <property type="entry name" value="Rhodanese/Cell cycle control phosphatase"/>
    <property type="match status" value="1"/>
</dbReference>
<dbReference type="PROSITE" id="PS50206">
    <property type="entry name" value="RHODANESE_3"/>
    <property type="match status" value="1"/>
</dbReference>
<name>SELU_SHESH</name>
<evidence type="ECO:0000255" key="1">
    <source>
        <dbReference type="HAMAP-Rule" id="MF_01622"/>
    </source>
</evidence>